<accession>A6VEI4</accession>
<sequence length="490" mass="53247">MARFEEQKLYIGGRYVEASSGATFETINPANGEVLAKVQRASREDVERAVQSAVEGQKVWAAMTAMQRSRILRRAVDLLRERNDELAALETLDTGKPLAETRAVDIVTGADVLEYYAGLVPAIEGEQIPLRETSFVYTRREPLGVVAGIGAWNYPVQIALWKSAPALAAGNAMIFKPSEVTPLTALKLAEIYTEAGVPDGVFNVLTGSGREVGQWLTEHPLIEKISFTGGTSTGKKVMASASSSSLKEVTMELGGKSPLIIFPDADLDRAADIAVMANFFSSGQVCTNGTRVFIHRSQQARFEAKVLERVQRIRLGDPQDENTNFGPLVSFPHMESVLGYIESGKAQKARLLCGGERVTEGAFGNGAYVAPTVFTDCSDDMTIVREEIFGPVMSILVYDDEDEAIRRANDTEYGLAAGVVTQDLARAHRAIHRLEAGICWINTWGESPAEMPVGGYKQSGVGRENGLTTLAHYTRIKSVQVELGDYASVF</sequence>
<name>BETB_PSEP7</name>
<evidence type="ECO:0000255" key="1">
    <source>
        <dbReference type="HAMAP-Rule" id="MF_00804"/>
    </source>
</evidence>
<keyword id="KW-0479">Metal-binding</keyword>
<keyword id="KW-0520">NAD</keyword>
<keyword id="KW-0521">NADP</keyword>
<keyword id="KW-0558">Oxidation</keyword>
<keyword id="KW-0560">Oxidoreductase</keyword>
<keyword id="KW-0630">Potassium</keyword>
<protein>
    <recommendedName>
        <fullName evidence="1">Betaine aldehyde dehydrogenase</fullName>
        <shortName evidence="1">BADH</shortName>
        <ecNumber evidence="1">1.2.1.8</ecNumber>
    </recommendedName>
</protein>
<feature type="chain" id="PRO_1000047045" description="Betaine aldehyde dehydrogenase">
    <location>
        <begin position="1"/>
        <end position="490"/>
    </location>
</feature>
<feature type="active site" description="Charge relay system" evidence="1">
    <location>
        <position position="162"/>
    </location>
</feature>
<feature type="active site" description="Proton acceptor" evidence="1">
    <location>
        <position position="252"/>
    </location>
</feature>
<feature type="active site" description="Nucleophile" evidence="1">
    <location>
        <position position="286"/>
    </location>
</feature>
<feature type="active site" description="Charge relay system" evidence="1">
    <location>
        <position position="464"/>
    </location>
</feature>
<feature type="binding site" evidence="1">
    <location>
        <position position="26"/>
    </location>
    <ligand>
        <name>K(+)</name>
        <dbReference type="ChEBI" id="CHEBI:29103"/>
        <label>1</label>
    </ligand>
</feature>
<feature type="binding site" evidence="1">
    <location>
        <position position="27"/>
    </location>
    <ligand>
        <name>K(+)</name>
        <dbReference type="ChEBI" id="CHEBI:29103"/>
        <label>1</label>
    </ligand>
</feature>
<feature type="binding site" evidence="1">
    <location>
        <position position="93"/>
    </location>
    <ligand>
        <name>K(+)</name>
        <dbReference type="ChEBI" id="CHEBI:29103"/>
        <label>1</label>
    </ligand>
</feature>
<feature type="binding site" evidence="1">
    <location>
        <begin position="150"/>
        <end position="152"/>
    </location>
    <ligand>
        <name>NAD(+)</name>
        <dbReference type="ChEBI" id="CHEBI:57540"/>
    </ligand>
</feature>
<feature type="binding site" evidence="1">
    <location>
        <begin position="176"/>
        <end position="179"/>
    </location>
    <ligand>
        <name>NAD(+)</name>
        <dbReference type="ChEBI" id="CHEBI:57540"/>
    </ligand>
</feature>
<feature type="binding site" evidence="1">
    <location>
        <position position="180"/>
    </location>
    <ligand>
        <name>K(+)</name>
        <dbReference type="ChEBI" id="CHEBI:29103"/>
        <label>1</label>
    </ligand>
</feature>
<feature type="binding site" evidence="1">
    <location>
        <begin position="230"/>
        <end position="233"/>
    </location>
    <ligand>
        <name>NAD(+)</name>
        <dbReference type="ChEBI" id="CHEBI:57540"/>
    </ligand>
</feature>
<feature type="binding site" evidence="1">
    <location>
        <position position="246"/>
    </location>
    <ligand>
        <name>K(+)</name>
        <dbReference type="ChEBI" id="CHEBI:29103"/>
        <label>2</label>
    </ligand>
</feature>
<feature type="binding site" evidence="1">
    <location>
        <position position="254"/>
    </location>
    <ligand>
        <name>NAD(+)</name>
        <dbReference type="ChEBI" id="CHEBI:57540"/>
    </ligand>
</feature>
<feature type="binding site" description="covalent" evidence="1">
    <location>
        <position position="286"/>
    </location>
    <ligand>
        <name>NAD(+)</name>
        <dbReference type="ChEBI" id="CHEBI:57540"/>
    </ligand>
</feature>
<feature type="binding site" evidence="1">
    <location>
        <position position="387"/>
    </location>
    <ligand>
        <name>NAD(+)</name>
        <dbReference type="ChEBI" id="CHEBI:57540"/>
    </ligand>
</feature>
<feature type="binding site" evidence="1">
    <location>
        <position position="457"/>
    </location>
    <ligand>
        <name>K(+)</name>
        <dbReference type="ChEBI" id="CHEBI:29103"/>
        <label>2</label>
    </ligand>
</feature>
<feature type="binding site" evidence="1">
    <location>
        <position position="460"/>
    </location>
    <ligand>
        <name>K(+)</name>
        <dbReference type="ChEBI" id="CHEBI:29103"/>
        <label>2</label>
    </ligand>
</feature>
<feature type="site" description="Seems to be a necessary countercharge to the potassium cations" evidence="1">
    <location>
        <position position="248"/>
    </location>
</feature>
<feature type="modified residue" description="Cysteine sulfenic acid (-SOH)" evidence="1">
    <location>
        <position position="286"/>
    </location>
</feature>
<organism>
    <name type="scientific">Pseudomonas paraeruginosa (strain DSM 24068 / PA7)</name>
    <name type="common">Pseudomonas aeruginosa (strain PA7)</name>
    <dbReference type="NCBI Taxonomy" id="381754"/>
    <lineage>
        <taxon>Bacteria</taxon>
        <taxon>Pseudomonadati</taxon>
        <taxon>Pseudomonadota</taxon>
        <taxon>Gammaproteobacteria</taxon>
        <taxon>Pseudomonadales</taxon>
        <taxon>Pseudomonadaceae</taxon>
        <taxon>Pseudomonas</taxon>
        <taxon>Pseudomonas paraeruginosa</taxon>
    </lineage>
</organism>
<reference key="1">
    <citation type="submission" date="2007-06" db="EMBL/GenBank/DDBJ databases">
        <authorList>
            <person name="Dodson R.J."/>
            <person name="Harkins D."/>
            <person name="Paulsen I.T."/>
        </authorList>
    </citation>
    <scope>NUCLEOTIDE SEQUENCE [LARGE SCALE GENOMIC DNA]</scope>
    <source>
        <strain>DSM 24068 / PA7</strain>
    </source>
</reference>
<gene>
    <name evidence="1" type="primary">betB</name>
    <name type="ordered locus">PSPA7_6158</name>
</gene>
<comment type="function">
    <text evidence="1">Involved in the biosynthesis of the osmoprotectant glycine betaine. Catalyzes the irreversible oxidation of betaine aldehyde to the corresponding acid.</text>
</comment>
<comment type="catalytic activity">
    <reaction evidence="1">
        <text>betaine aldehyde + NAD(+) + H2O = glycine betaine + NADH + 2 H(+)</text>
        <dbReference type="Rhea" id="RHEA:15305"/>
        <dbReference type="ChEBI" id="CHEBI:15377"/>
        <dbReference type="ChEBI" id="CHEBI:15378"/>
        <dbReference type="ChEBI" id="CHEBI:15710"/>
        <dbReference type="ChEBI" id="CHEBI:17750"/>
        <dbReference type="ChEBI" id="CHEBI:57540"/>
        <dbReference type="ChEBI" id="CHEBI:57945"/>
        <dbReference type="EC" id="1.2.1.8"/>
    </reaction>
    <physiologicalReaction direction="left-to-right" evidence="1">
        <dbReference type="Rhea" id="RHEA:15306"/>
    </physiologicalReaction>
</comment>
<comment type="cofactor">
    <cofactor evidence="1">
        <name>K(+)</name>
        <dbReference type="ChEBI" id="CHEBI:29103"/>
    </cofactor>
    <text evidence="1">Binds 2 potassium ions per subunit.</text>
</comment>
<comment type="pathway">
    <text evidence="1">Amine and polyamine biosynthesis; betaine biosynthesis via choline pathway; betaine from betaine aldehyde: step 1/1.</text>
</comment>
<comment type="subunit">
    <text evidence="1">Dimer of dimers.</text>
</comment>
<comment type="similarity">
    <text evidence="1">Belongs to the aldehyde dehydrogenase family.</text>
</comment>
<dbReference type="EC" id="1.2.1.8" evidence="1"/>
<dbReference type="EMBL" id="CP000744">
    <property type="protein sequence ID" value="ABR80835.1"/>
    <property type="molecule type" value="Genomic_DNA"/>
</dbReference>
<dbReference type="RefSeq" id="WP_012077969.1">
    <property type="nucleotide sequence ID" value="NC_009656.1"/>
</dbReference>
<dbReference type="SMR" id="A6VEI4"/>
<dbReference type="KEGG" id="pap:PSPA7_6158"/>
<dbReference type="HOGENOM" id="CLU_005391_0_2_6"/>
<dbReference type="UniPathway" id="UPA00529">
    <property type="reaction ID" value="UER00386"/>
</dbReference>
<dbReference type="Proteomes" id="UP000001582">
    <property type="component" value="Chromosome"/>
</dbReference>
<dbReference type="GO" id="GO:0008802">
    <property type="term" value="F:betaine-aldehyde dehydrogenase (NAD+) activity"/>
    <property type="evidence" value="ECO:0007669"/>
    <property type="project" value="UniProtKB-UniRule"/>
</dbReference>
<dbReference type="GO" id="GO:0046872">
    <property type="term" value="F:metal ion binding"/>
    <property type="evidence" value="ECO:0007669"/>
    <property type="project" value="UniProtKB-KW"/>
</dbReference>
<dbReference type="GO" id="GO:0019285">
    <property type="term" value="P:glycine betaine biosynthetic process from choline"/>
    <property type="evidence" value="ECO:0007669"/>
    <property type="project" value="UniProtKB-UniRule"/>
</dbReference>
<dbReference type="CDD" id="cd07090">
    <property type="entry name" value="ALDH_F9_TMBADH"/>
    <property type="match status" value="1"/>
</dbReference>
<dbReference type="FunFam" id="3.40.309.10:FF:000014">
    <property type="entry name" value="NAD/NADP-dependent betaine aldehyde dehydrogenase"/>
    <property type="match status" value="1"/>
</dbReference>
<dbReference type="FunFam" id="3.40.605.10:FF:000007">
    <property type="entry name" value="NAD/NADP-dependent betaine aldehyde dehydrogenase"/>
    <property type="match status" value="1"/>
</dbReference>
<dbReference type="Gene3D" id="3.40.605.10">
    <property type="entry name" value="Aldehyde Dehydrogenase, Chain A, domain 1"/>
    <property type="match status" value="1"/>
</dbReference>
<dbReference type="Gene3D" id="3.40.309.10">
    <property type="entry name" value="Aldehyde Dehydrogenase, Chain A, domain 2"/>
    <property type="match status" value="1"/>
</dbReference>
<dbReference type="HAMAP" id="MF_00804">
    <property type="entry name" value="BADH"/>
    <property type="match status" value="1"/>
</dbReference>
<dbReference type="InterPro" id="IPR016161">
    <property type="entry name" value="Ald_DH/histidinol_DH"/>
</dbReference>
<dbReference type="InterPro" id="IPR016163">
    <property type="entry name" value="Ald_DH_C"/>
</dbReference>
<dbReference type="InterPro" id="IPR016160">
    <property type="entry name" value="Ald_DH_CS_CYS"/>
</dbReference>
<dbReference type="InterPro" id="IPR029510">
    <property type="entry name" value="Ald_DH_CS_GLU"/>
</dbReference>
<dbReference type="InterPro" id="IPR016162">
    <property type="entry name" value="Ald_DH_N"/>
</dbReference>
<dbReference type="InterPro" id="IPR015590">
    <property type="entry name" value="Aldehyde_DH_dom"/>
</dbReference>
<dbReference type="InterPro" id="IPR011264">
    <property type="entry name" value="BADH"/>
</dbReference>
<dbReference type="NCBIfam" id="TIGR01804">
    <property type="entry name" value="BADH"/>
    <property type="match status" value="1"/>
</dbReference>
<dbReference type="NCBIfam" id="NF009725">
    <property type="entry name" value="PRK13252.1"/>
    <property type="match status" value="1"/>
</dbReference>
<dbReference type="PANTHER" id="PTHR11699">
    <property type="entry name" value="ALDEHYDE DEHYDROGENASE-RELATED"/>
    <property type="match status" value="1"/>
</dbReference>
<dbReference type="Pfam" id="PF00171">
    <property type="entry name" value="Aldedh"/>
    <property type="match status" value="1"/>
</dbReference>
<dbReference type="SUPFAM" id="SSF53720">
    <property type="entry name" value="ALDH-like"/>
    <property type="match status" value="1"/>
</dbReference>
<dbReference type="PROSITE" id="PS00070">
    <property type="entry name" value="ALDEHYDE_DEHYDR_CYS"/>
    <property type="match status" value="1"/>
</dbReference>
<dbReference type="PROSITE" id="PS00687">
    <property type="entry name" value="ALDEHYDE_DEHYDR_GLU"/>
    <property type="match status" value="1"/>
</dbReference>
<proteinExistence type="inferred from homology"/>